<organism>
    <name type="scientific">Homo sapiens</name>
    <name type="common">Human</name>
    <dbReference type="NCBI Taxonomy" id="9606"/>
    <lineage>
        <taxon>Eukaryota</taxon>
        <taxon>Metazoa</taxon>
        <taxon>Chordata</taxon>
        <taxon>Craniata</taxon>
        <taxon>Vertebrata</taxon>
        <taxon>Euteleostomi</taxon>
        <taxon>Mammalia</taxon>
        <taxon>Eutheria</taxon>
        <taxon>Euarchontoglires</taxon>
        <taxon>Primates</taxon>
        <taxon>Haplorrhini</taxon>
        <taxon>Catarrhini</taxon>
        <taxon>Hominidae</taxon>
        <taxon>Homo</taxon>
    </lineage>
</organism>
<protein>
    <recommendedName>
        <fullName evidence="9">Protein MTSS 2</fullName>
    </recommendedName>
    <alternativeName>
        <fullName>Actin-bundling with BAIAP2 homology protein 1</fullName>
        <shortName>ABBA-1</shortName>
    </alternativeName>
    <alternativeName>
        <fullName>MTSS1-like protein</fullName>
    </alternativeName>
</protein>
<sequence>METAEKECGALGGLFQAIVNDMKSSYPIWEDFNSKATKLHSQLRTTVLAAVAFLDAFQKVADMATNTRGATRDIGSALTRMCMRHRSIETKLRQFTNALLESLINPLQERIEDWKKAANQLDKDHAKEYKRARHEIKKKSSDTLKLQKKARKELLGKGDLQPQLDSALQDVNDMYLLLEETEKQAVRRALIEERGRFCTFITFLQPVVNGELTMLGEITHLQGIIDDLVVLTAEPHKLPPASEQVIKDLKGSDYSWSYQTPPSSPSSSSSRKSSMCSAPSSSSSAKGGGAPWPGGAQTYSPSSTCRYRSLAQPATTTARLSSVSSHDSGFVSQDATYSKPPSPMPSDITSQKSSSSASSEASETCQSVSECSSPTSDWSKVGSHEQPSGATLQRRKDRVELLRDTEPGPASGGTLGPSGEEAPRPRMSPATIAAKHGEEVSPAASDLAMVLTRGLSLEHQKSSRDSLQYSSGYSTQTTTPSCSEDTIPSQGSDYDCYSVNGDADSEGPPEFDKSSTIPRNSNIAQNYRRLIQTKRPASTAGLPTAGLPTATGLPSGAPPGVATIRRTPSTKPTVRRALSSAGPIPIRPPIVPVKTPTVPDSPGYMGPTRAGSEECVFYTDETASPLAPDLAKASPKRLSLPNTAWGSPSPEAAGYPGAGAEDEQQQLAANRHSLVEKLGELVAGAHALGEGQFPFPTALSATPTEETPTPPPAATSDPPAEDMLVAIRRGVRLRRTVTNDRSAPRIL</sequence>
<proteinExistence type="evidence at protein level"/>
<feature type="chain" id="PRO_0000319610" description="Protein MTSS 2">
    <location>
        <begin position="1"/>
        <end position="747"/>
    </location>
</feature>
<feature type="domain" description="IMD" evidence="3">
    <location>
        <begin position="1"/>
        <end position="252"/>
    </location>
</feature>
<feature type="domain" description="WH2">
    <location>
        <begin position="719"/>
        <end position="736"/>
    </location>
</feature>
<feature type="region of interest" description="Disordered" evidence="4">
    <location>
        <begin position="256"/>
        <end position="302"/>
    </location>
</feature>
<feature type="region of interest" description="Disordered" evidence="4">
    <location>
        <begin position="318"/>
        <end position="441"/>
    </location>
</feature>
<feature type="region of interest" description="Disordered" evidence="4">
    <location>
        <begin position="457"/>
        <end position="522"/>
    </location>
</feature>
<feature type="region of interest" description="Disordered" evidence="4">
    <location>
        <begin position="543"/>
        <end position="599"/>
    </location>
</feature>
<feature type="region of interest" description="Disordered" evidence="4">
    <location>
        <begin position="638"/>
        <end position="664"/>
    </location>
</feature>
<feature type="region of interest" description="Disordered" evidence="4">
    <location>
        <begin position="691"/>
        <end position="720"/>
    </location>
</feature>
<feature type="coiled-coil region" evidence="2">
    <location>
        <begin position="135"/>
        <end position="159"/>
    </location>
</feature>
<feature type="compositionally biased region" description="Low complexity" evidence="4">
    <location>
        <begin position="256"/>
        <end position="284"/>
    </location>
</feature>
<feature type="compositionally biased region" description="Low complexity" evidence="4">
    <location>
        <begin position="321"/>
        <end position="332"/>
    </location>
</feature>
<feature type="compositionally biased region" description="Low complexity" evidence="4">
    <location>
        <begin position="349"/>
        <end position="367"/>
    </location>
</feature>
<feature type="compositionally biased region" description="Polar residues" evidence="4">
    <location>
        <begin position="368"/>
        <end position="378"/>
    </location>
</feature>
<feature type="compositionally biased region" description="Basic and acidic residues" evidence="4">
    <location>
        <begin position="397"/>
        <end position="406"/>
    </location>
</feature>
<feature type="compositionally biased region" description="Low complexity" evidence="4">
    <location>
        <begin position="466"/>
        <end position="479"/>
    </location>
</feature>
<feature type="compositionally biased region" description="Polar residues" evidence="4">
    <location>
        <begin position="480"/>
        <end position="492"/>
    </location>
</feature>
<feature type="compositionally biased region" description="Low complexity" evidence="4">
    <location>
        <begin position="646"/>
        <end position="659"/>
    </location>
</feature>
<feature type="compositionally biased region" description="Low complexity" evidence="4">
    <location>
        <begin position="696"/>
        <end position="707"/>
    </location>
</feature>
<feature type="modified residue" description="Phosphothreonine" evidence="1">
    <location>
        <position position="260"/>
    </location>
</feature>
<feature type="modified residue" description="Phosphoserine" evidence="1">
    <location>
        <position position="264"/>
    </location>
</feature>
<feature type="modified residue" description="Phosphoserine" evidence="12 13">
    <location>
        <position position="441"/>
    </location>
</feature>
<feature type="modified residue" description="Phosphoserine" evidence="12 14">
    <location>
        <position position="579"/>
    </location>
</feature>
<feature type="modified residue" description="Phosphoserine" evidence="11 14 15">
    <location>
        <position position="601"/>
    </location>
</feature>
<feature type="modified residue" description="Phosphoserine" evidence="12 14">
    <location>
        <position position="612"/>
    </location>
</feature>
<feature type="modified residue" description="Phosphoserine" evidence="12">
    <location>
        <position position="624"/>
    </location>
</feature>
<feature type="modified residue" description="Phosphoserine" evidence="12">
    <location>
        <position position="634"/>
    </location>
</feature>
<feature type="modified residue" description="Phosphoserine" evidence="11 12 15">
    <location>
        <position position="639"/>
    </location>
</feature>
<feature type="modified residue" description="Phosphothreonine" evidence="11">
    <location>
        <position position="643"/>
    </location>
</feature>
<feature type="splice variant" id="VSP_031513" description="In isoform 2." evidence="8">
    <location>
        <begin position="153"/>
        <end position="155"/>
    </location>
</feature>
<feature type="splice variant" id="VSP_031514" description="In isoform 2." evidence="8">
    <original>SPSSSSSRKSSMCSAPSSSSSAKGGGAPWPG</original>
    <variation>VPSEPFVSFLSVRFWKNSPLLPAPSTPSSPI</variation>
    <location>
        <begin position="264"/>
        <end position="294"/>
    </location>
</feature>
<feature type="splice variant" id="VSP_031515" description="In isoform 2." evidence="8">
    <location>
        <begin position="295"/>
        <end position="747"/>
    </location>
</feature>
<feature type="sequence variant" id="VAR_087784" description="In IDDOF; decreased protein abundance in patient cells; decreased function suggested by rescue assays in mutant fly; dbSNP:rs753688777." evidence="7">
    <original>R</original>
    <variation>W</variation>
    <location>
        <position position="671"/>
    </location>
</feature>
<feature type="mutagenesis site" description="Marked reduction in RAC1-binding, loss of increase in RAC1 activity and of dorsal ruffles formation in response to PDGF treatment; when associated with D-116, D-123, D-127, D-130, D-137, D-138, D-139, D-145, D-148, D-149, D-152 and D-157." evidence="6">
    <original>K</original>
    <variation>D</variation>
    <location>
        <position position="115"/>
    </location>
</feature>
<feature type="mutagenesis site" description="Marked reduction in RAC1-binding, loss of increase in RAC1 activity and of dorsal ruffles formation in response to PDGF treatment; when associated with D-115, D-123, D-127, D-130, D-137, D-138, D-139, D-145, D-148, D-149, D-152 and D-157." evidence="6">
    <original>K</original>
    <variation>D</variation>
    <location>
        <position position="116"/>
    </location>
</feature>
<feature type="mutagenesis site" description="Marked reduction in RAC1-binding, loss of increase in RAC1 activity and of dorsal ruffles formation in response to PDGF treatment; when associated with D-115, D-116, D-127, D-130, D-137, D-138, D-139, D-145, D-148, D-149, D-152 and D-157." evidence="6">
    <original>K</original>
    <variation>D</variation>
    <location>
        <position position="123"/>
    </location>
</feature>
<feature type="mutagenesis site" description="Marked reduction in RAC1-binding, loss of increase in RAC1 activity and of dorsal ruffles formation in response to PDGF treatment; when associated with D-115, D-116, D-123, D-130, D-137, D-138, D-139, D-145, D-148, D-149, D-152 and D-157." evidence="6">
    <original>K</original>
    <variation>D</variation>
    <location>
        <position position="127"/>
    </location>
</feature>
<feature type="mutagenesis site" description="Marked reduction in RAC1-binding, loss of increase in RAC1 activity and of dorsal ruffles formation in response to PDGF treatment; when associated with D-115, D-116, D-123, D-127, D-137, D-138, D-139, D-145, D-148, D-149, D-152 and D-157." evidence="6">
    <original>K</original>
    <variation>D</variation>
    <location>
        <position position="130"/>
    </location>
</feature>
<feature type="mutagenesis site" description="Marked reduction in RAC1-binding, loss of increase in RAC1 activity and of dorsal ruffles formation in response to PDGF treatment; when associated with D-115, D-116, D-123, D-127, D-130, D-138, D-139, D-145, D-148, D-149, D-152 and D-157." evidence="6">
    <original>K</original>
    <variation>D</variation>
    <location>
        <position position="137"/>
    </location>
</feature>
<feature type="mutagenesis site" description="Marked reduction in RAC1-binding, loss of increase in RAC1 activity and of dorsal ruffles formation in response to PDGF treatment; when associated with D-115, D-116, D-123, D-127, D-130, D-137, D-139, D-145, D-148, D-149, D-152 and D-157." evidence="6">
    <original>K</original>
    <variation>D</variation>
    <location>
        <position position="138"/>
    </location>
</feature>
<feature type="mutagenesis site" description="Marked reduction in RAC1-binding, loss of increase in RAC1 activity and of dorsal ruffles formation in response to PDGF treatment; when associated with D-115, D-116, D-123, D-127, D-130, D-137, D-138, D-145, D-148, D-149, D-152 and D-157." evidence="6">
    <original>K</original>
    <variation>D</variation>
    <location>
        <position position="139"/>
    </location>
</feature>
<feature type="mutagenesis site" description="Marked reduction in RAC1-binding, loss of increase in RAC1 activity and of dorsal ruffles formation in response to PDGF treatment; when associated with D-115, D-116, D-123, D-127, D-130, D-137, D-138, D-139, D-148, D-149, D-152 and D-157." evidence="6">
    <original>K</original>
    <variation>D</variation>
    <location>
        <position position="145"/>
    </location>
</feature>
<feature type="mutagenesis site" description="Marked reduction in RAC1-binding, loss of increase in RAC1 activity and of dorsal ruffles formation in response to PDGF treatment; when associated with D-115, D-116, D-123, D-127, D-130, D-137, D-138, D-139, D-145, D-149, D-152 and D-157." evidence="6">
    <original>K</original>
    <variation>D</variation>
    <location>
        <position position="148"/>
    </location>
</feature>
<feature type="mutagenesis site" description="Marked reduction in RAC1-binding, loss of increase in RAC1 activity and of dorsal ruffles formation in response to PDGF treatment; when associated with D-115, D-116, D-123, D-127, D-130, D-137, D-138, D-139, D-145, D-148, D-152 and D-157." evidence="6">
    <original>K</original>
    <variation>D</variation>
    <location>
        <position position="149"/>
    </location>
</feature>
<feature type="mutagenesis site" description="Marked reduction in RAC1-binding, loss of increase in RAC1 activity and of dorsal ruffles formation in response to PDGF treatment; when associated with D-115, D-116, D-123, D-127, D-130, D-137, D-138, D-139, D-145, D-148, D-149 and D-157." evidence="6">
    <original>K</original>
    <variation>D</variation>
    <location>
        <position position="152"/>
    </location>
</feature>
<feature type="mutagenesis site" description="Marked reduction in RAC1-binding, loss of increase in RAC1 activity and of dorsal ruffles formation in response to PDGF treatment; when associated with D-115, D-116, D-123, D-127, D-130, D-137, D-138, D-139, D-145, D-148, D-149 and D-152." evidence="6">
    <original>K</original>
    <variation>D</variation>
    <location>
        <position position="157"/>
    </location>
</feature>
<evidence type="ECO:0000250" key="1">
    <source>
        <dbReference type="UniProtKB" id="Q6P9S0"/>
    </source>
</evidence>
<evidence type="ECO:0000255" key="2"/>
<evidence type="ECO:0000255" key="3">
    <source>
        <dbReference type="PROSITE-ProRule" id="PRU00668"/>
    </source>
</evidence>
<evidence type="ECO:0000256" key="4">
    <source>
        <dbReference type="SAM" id="MobiDB-lite"/>
    </source>
</evidence>
<evidence type="ECO:0000269" key="5">
    <source>
    </source>
</evidence>
<evidence type="ECO:0000269" key="6">
    <source>
    </source>
</evidence>
<evidence type="ECO:0000269" key="7">
    <source>
    </source>
</evidence>
<evidence type="ECO:0000303" key="8">
    <source>
    </source>
</evidence>
<evidence type="ECO:0000305" key="9"/>
<evidence type="ECO:0000312" key="10">
    <source>
        <dbReference type="HGNC" id="HGNC:25094"/>
    </source>
</evidence>
<evidence type="ECO:0007744" key="11">
    <source>
    </source>
</evidence>
<evidence type="ECO:0007744" key="12">
    <source>
    </source>
</evidence>
<evidence type="ECO:0007744" key="13">
    <source>
    </source>
</evidence>
<evidence type="ECO:0007744" key="14">
    <source>
    </source>
</evidence>
<evidence type="ECO:0007744" key="15">
    <source>
    </source>
</evidence>
<dbReference type="EMBL" id="AB115770">
    <property type="protein sequence ID" value="BAC98378.1"/>
    <property type="molecule type" value="mRNA"/>
</dbReference>
<dbReference type="EMBL" id="AC020763">
    <property type="status" value="NOT_ANNOTATED_CDS"/>
    <property type="molecule type" value="Genomic_DNA"/>
</dbReference>
<dbReference type="EMBL" id="BC002770">
    <property type="protein sequence ID" value="AAH02770.1"/>
    <property type="molecule type" value="mRNA"/>
</dbReference>
<dbReference type="CCDS" id="CCDS32476.1">
    <molecule id="Q765P7-1"/>
</dbReference>
<dbReference type="RefSeq" id="NP_612392.1">
    <molecule id="Q765P7-1"/>
    <property type="nucleotide sequence ID" value="NM_138383.3"/>
</dbReference>
<dbReference type="SMR" id="Q765P7"/>
<dbReference type="BioGRID" id="124914">
    <property type="interactions" value="51"/>
</dbReference>
<dbReference type="FunCoup" id="Q765P7">
    <property type="interactions" value="115"/>
</dbReference>
<dbReference type="IntAct" id="Q765P7">
    <property type="interactions" value="39"/>
</dbReference>
<dbReference type="MINT" id="Q765P7"/>
<dbReference type="STRING" id="9606.ENSP00000341171"/>
<dbReference type="GlyGen" id="Q765P7">
    <property type="glycosylation" value="3 sites, 1 O-linked glycan (2 sites)"/>
</dbReference>
<dbReference type="iPTMnet" id="Q765P7"/>
<dbReference type="PhosphoSitePlus" id="Q765P7"/>
<dbReference type="BioMuta" id="MTSS1L"/>
<dbReference type="DMDM" id="74727332"/>
<dbReference type="jPOST" id="Q765P7"/>
<dbReference type="MassIVE" id="Q765P7"/>
<dbReference type="PaxDb" id="9606-ENSP00000341171"/>
<dbReference type="PeptideAtlas" id="Q765P7"/>
<dbReference type="ProteomicsDB" id="68659">
    <molecule id="Q765P7-1"/>
</dbReference>
<dbReference type="ProteomicsDB" id="68660">
    <molecule id="Q765P7-2"/>
</dbReference>
<dbReference type="Pumba" id="Q765P7"/>
<dbReference type="Antibodypedia" id="58925">
    <property type="antibodies" value="27 antibodies from 11 providers"/>
</dbReference>
<dbReference type="DNASU" id="92154"/>
<dbReference type="Ensembl" id="ENST00000338779.11">
    <molecule id="Q765P7-1"/>
    <property type="protein sequence ID" value="ENSP00000341171.6"/>
    <property type="gene ID" value="ENSG00000132613.16"/>
</dbReference>
<dbReference type="GeneID" id="92154"/>
<dbReference type="KEGG" id="hsa:92154"/>
<dbReference type="MANE-Select" id="ENST00000338779.11">
    <property type="protein sequence ID" value="ENSP00000341171.6"/>
    <property type="RefSeq nucleotide sequence ID" value="NM_138383.3"/>
    <property type="RefSeq protein sequence ID" value="NP_612392.1"/>
</dbReference>
<dbReference type="UCSC" id="uc002ezj.4">
    <molecule id="Q765P7-1"/>
    <property type="organism name" value="human"/>
</dbReference>
<dbReference type="AGR" id="HGNC:25094"/>
<dbReference type="CTD" id="92154"/>
<dbReference type="DisGeNET" id="92154"/>
<dbReference type="GeneCards" id="MTSS2"/>
<dbReference type="HGNC" id="HGNC:25094">
    <property type="gene designation" value="MTSS2"/>
</dbReference>
<dbReference type="HPA" id="ENSG00000132613">
    <property type="expression patterns" value="Tissue enhanced (brain)"/>
</dbReference>
<dbReference type="MalaCards" id="MTSS2"/>
<dbReference type="MIM" id="616951">
    <property type="type" value="gene"/>
</dbReference>
<dbReference type="MIM" id="620086">
    <property type="type" value="phenotype"/>
</dbReference>
<dbReference type="neXtProt" id="NX_Q765P7"/>
<dbReference type="OpenTargets" id="ENSG00000132613"/>
<dbReference type="PharmGKB" id="PA164723215"/>
<dbReference type="VEuPathDB" id="HostDB:ENSG00000132613"/>
<dbReference type="eggNOG" id="ENOG502QRG4">
    <property type="taxonomic scope" value="Eukaryota"/>
</dbReference>
<dbReference type="GeneTree" id="ENSGT00950000183156"/>
<dbReference type="HOGENOM" id="CLU_004805_2_1_1"/>
<dbReference type="InParanoid" id="Q765P7"/>
<dbReference type="OMA" id="WEDFNAK"/>
<dbReference type="OrthoDB" id="10061327at2759"/>
<dbReference type="PAN-GO" id="Q765P7">
    <property type="GO annotations" value="6 GO annotations based on evolutionary models"/>
</dbReference>
<dbReference type="PhylomeDB" id="Q765P7"/>
<dbReference type="TreeFam" id="TF320619"/>
<dbReference type="PathwayCommons" id="Q765P7"/>
<dbReference type="SignaLink" id="Q765P7"/>
<dbReference type="BioGRID-ORCS" id="92154">
    <property type="hits" value="16 hits in 1154 CRISPR screens"/>
</dbReference>
<dbReference type="CD-CODE" id="FB4E32DD">
    <property type="entry name" value="Presynaptic clusters and postsynaptic densities"/>
</dbReference>
<dbReference type="ChiTaRS" id="MTSS1L">
    <property type="organism name" value="human"/>
</dbReference>
<dbReference type="GenomeRNAi" id="92154"/>
<dbReference type="Pharos" id="Q765P7">
    <property type="development level" value="Tbio"/>
</dbReference>
<dbReference type="PRO" id="PR:Q765P7"/>
<dbReference type="Proteomes" id="UP000005640">
    <property type="component" value="Chromosome 16"/>
</dbReference>
<dbReference type="RNAct" id="Q765P7">
    <property type="molecule type" value="protein"/>
</dbReference>
<dbReference type="Bgee" id="ENSG00000132613">
    <property type="expression patterns" value="Expressed in C1 segment of cervical spinal cord and 131 other cell types or tissues"/>
</dbReference>
<dbReference type="ExpressionAtlas" id="Q765P7">
    <property type="expression patterns" value="baseline and differential"/>
</dbReference>
<dbReference type="GO" id="GO:0015629">
    <property type="term" value="C:actin cytoskeleton"/>
    <property type="evidence" value="ECO:0000318"/>
    <property type="project" value="GO_Central"/>
</dbReference>
<dbReference type="GO" id="GO:0030864">
    <property type="term" value="C:cortical actin cytoskeleton"/>
    <property type="evidence" value="ECO:0007669"/>
    <property type="project" value="Ensembl"/>
</dbReference>
<dbReference type="GO" id="GO:0009898">
    <property type="term" value="C:cytoplasmic side of plasma membrane"/>
    <property type="evidence" value="ECO:0000318"/>
    <property type="project" value="GO_Central"/>
</dbReference>
<dbReference type="GO" id="GO:0030027">
    <property type="term" value="C:lamellipodium"/>
    <property type="evidence" value="ECO:0007669"/>
    <property type="project" value="Ensembl"/>
</dbReference>
<dbReference type="GO" id="GO:0032587">
    <property type="term" value="C:ruffle membrane"/>
    <property type="evidence" value="ECO:0000314"/>
    <property type="project" value="UniProtKB"/>
</dbReference>
<dbReference type="GO" id="GO:0003779">
    <property type="term" value="F:actin binding"/>
    <property type="evidence" value="ECO:0000318"/>
    <property type="project" value="GO_Central"/>
</dbReference>
<dbReference type="GO" id="GO:0003785">
    <property type="term" value="F:actin monomer binding"/>
    <property type="evidence" value="ECO:0007669"/>
    <property type="project" value="Ensembl"/>
</dbReference>
<dbReference type="GO" id="GO:0005096">
    <property type="term" value="F:GTPase activator activity"/>
    <property type="evidence" value="ECO:0000314"/>
    <property type="project" value="UniProtKB"/>
</dbReference>
<dbReference type="GO" id="GO:0005546">
    <property type="term" value="F:phosphatidylinositol-4,5-bisphosphate binding"/>
    <property type="evidence" value="ECO:0007669"/>
    <property type="project" value="Ensembl"/>
</dbReference>
<dbReference type="GO" id="GO:0005543">
    <property type="term" value="F:phospholipid binding"/>
    <property type="evidence" value="ECO:0000318"/>
    <property type="project" value="GO_Central"/>
</dbReference>
<dbReference type="GO" id="GO:0031267">
    <property type="term" value="F:small GTPase binding"/>
    <property type="evidence" value="ECO:0000353"/>
    <property type="project" value="UniProtKB"/>
</dbReference>
<dbReference type="GO" id="GO:0090630">
    <property type="term" value="P:activation of GTPase activity"/>
    <property type="evidence" value="ECO:0000314"/>
    <property type="project" value="UniProtKB"/>
</dbReference>
<dbReference type="GO" id="GO:0030031">
    <property type="term" value="P:cell projection assembly"/>
    <property type="evidence" value="ECO:0000318"/>
    <property type="project" value="GO_Central"/>
</dbReference>
<dbReference type="GO" id="GO:0036120">
    <property type="term" value="P:cellular response to platelet-derived growth factor stimulus"/>
    <property type="evidence" value="ECO:0000314"/>
    <property type="project" value="UniProtKB"/>
</dbReference>
<dbReference type="GO" id="GO:0097581">
    <property type="term" value="P:lamellipodium organization"/>
    <property type="evidence" value="ECO:0007669"/>
    <property type="project" value="Ensembl"/>
</dbReference>
<dbReference type="GO" id="GO:0061024">
    <property type="term" value="P:membrane organization"/>
    <property type="evidence" value="ECO:0000318"/>
    <property type="project" value="GO_Central"/>
</dbReference>
<dbReference type="GO" id="GO:0007009">
    <property type="term" value="P:plasma membrane organization"/>
    <property type="evidence" value="ECO:0007669"/>
    <property type="project" value="InterPro"/>
</dbReference>
<dbReference type="CDD" id="cd07643">
    <property type="entry name" value="I-BAR_IMD_MIM"/>
    <property type="match status" value="1"/>
</dbReference>
<dbReference type="CDD" id="cd22060">
    <property type="entry name" value="WH2_MTSS1"/>
    <property type="match status" value="1"/>
</dbReference>
<dbReference type="FunFam" id="1.20.1270.60:FF:000010">
    <property type="entry name" value="Metastasis suppressor 1, isoform CRA_e"/>
    <property type="match status" value="1"/>
</dbReference>
<dbReference type="Gene3D" id="1.20.1270.60">
    <property type="entry name" value="Arfaptin homology (AH) domain/BAR domain"/>
    <property type="match status" value="1"/>
</dbReference>
<dbReference type="InterPro" id="IPR027267">
    <property type="entry name" value="AH/BAR_dom_sf"/>
</dbReference>
<dbReference type="InterPro" id="IPR013606">
    <property type="entry name" value="I-BAR_dom"/>
</dbReference>
<dbReference type="InterPro" id="IPR030127">
    <property type="entry name" value="MTSS1/MTSS2"/>
</dbReference>
<dbReference type="InterPro" id="IPR003124">
    <property type="entry name" value="WH2_dom"/>
</dbReference>
<dbReference type="PANTHER" id="PTHR15708">
    <property type="entry name" value="ACTIN BUNDLING/MISSING IN METASTASIS-RELATED"/>
    <property type="match status" value="1"/>
</dbReference>
<dbReference type="PANTHER" id="PTHR15708:SF8">
    <property type="entry name" value="PROTEIN MTSS 2"/>
    <property type="match status" value="1"/>
</dbReference>
<dbReference type="Pfam" id="PF08397">
    <property type="entry name" value="IMD"/>
    <property type="match status" value="1"/>
</dbReference>
<dbReference type="Pfam" id="PF02205">
    <property type="entry name" value="WH2"/>
    <property type="match status" value="1"/>
</dbReference>
<dbReference type="SUPFAM" id="SSF103657">
    <property type="entry name" value="BAR/IMD domain-like"/>
    <property type="match status" value="1"/>
</dbReference>
<dbReference type="PROSITE" id="PS51338">
    <property type="entry name" value="IMD"/>
    <property type="match status" value="1"/>
</dbReference>
<accession>Q765P7</accession>
<accession>A6NJI7</accession>
<accession>Q9BUA8</accession>
<comment type="function">
    <text evidence="5">Involved in plasma membrane dynamics. Potentiated PDGF-mediated formation of membrane ruffles and lamellipodia in fibroblasts, acting via RAC1 activation (PubMed:14752106). May function in actin bundling (PubMed:14752106).</text>
</comment>
<comment type="subunit">
    <text evidence="6">Interacts (via IMD domain) with RAC1; this interaction may be important to potentiate PDGF-induced RAC1 activation.</text>
</comment>
<comment type="interaction">
    <interactant intactId="EBI-2815102">
        <id>Q765P7</id>
    </interactant>
    <interactant intactId="EBI-3905054">
        <id>P13196</id>
        <label>ALAS1</label>
    </interactant>
    <organismsDiffer>false</organismsDiffer>
    <experiments>3</experiments>
</comment>
<comment type="interaction">
    <interactant intactId="EBI-2815102">
        <id>Q765P7</id>
    </interactant>
    <interactant intactId="EBI-1222181">
        <id>Q9H7N4</id>
        <label>SCAF1</label>
    </interactant>
    <organismsDiffer>false</organismsDiffer>
    <experiments>3</experiments>
</comment>
<comment type="subcellular location">
    <subcellularLocation>
        <location evidence="6">Cytoplasm</location>
    </subcellularLocation>
    <subcellularLocation>
        <location evidence="6">Cell projection</location>
        <location evidence="6">Ruffle</location>
    </subcellularLocation>
    <text evidence="6">Colocalizes with RAC1 within membrane ruffles.</text>
</comment>
<comment type="alternative products">
    <event type="alternative splicing"/>
    <isoform>
        <id>Q765P7-1</id>
        <name>1</name>
        <sequence type="displayed"/>
    </isoform>
    <isoform>
        <id>Q765P7-2</id>
        <name>2</name>
        <sequence type="described" ref="VSP_031513 VSP_031514 VSP_031515"/>
    </isoform>
</comment>
<comment type="disease" evidence="7">
    <disease id="DI-06532">
        <name>Intellectual developmental disorder with ocular anomalies and distinctive facial features</name>
        <acronym>IDDOF</acronym>
        <description>An autosomal dominant disorder characterized by global developmental delay, mild intellectual disability, ophthalmologic anomalies, microcephaly or relative microcephaly, hearing loss, and characteristic facial features including long, upslanting palpebral fissures, bitemporal narrowing of the forehead, arched eyebrows, and epicanthal folds.</description>
        <dbReference type="MIM" id="620086"/>
    </disease>
    <text>The disease is caused by variants affecting the gene represented in this entry.</text>
</comment>
<comment type="similarity">
    <text evidence="9">Belongs to the MTSS family.</text>
</comment>
<keyword id="KW-0009">Actin-binding</keyword>
<keyword id="KW-0025">Alternative splicing</keyword>
<keyword id="KW-0966">Cell projection</keyword>
<keyword id="KW-0175">Coiled coil</keyword>
<keyword id="KW-0963">Cytoplasm</keyword>
<keyword id="KW-0225">Disease variant</keyword>
<keyword id="KW-0991">Intellectual disability</keyword>
<keyword id="KW-0597">Phosphoprotein</keyword>
<keyword id="KW-1267">Proteomics identification</keyword>
<keyword id="KW-1185">Reference proteome</keyword>
<reference key="1">
    <citation type="journal article" date="2004" name="J. Biol. Chem.">
        <title>A novel actin bundling/filopodium-forming domain conserved in insulin receptor tyrosine kinase substrate p53 and missing in metastasis protein.</title>
        <authorList>
            <person name="Yamagishi A."/>
            <person name="Masuda M."/>
            <person name="Ohki T."/>
            <person name="Onishi H."/>
            <person name="Mochizuki N."/>
        </authorList>
    </citation>
    <scope>NUCLEOTIDE SEQUENCE [MRNA]</scope>
    <scope>FUNCTION</scope>
    <scope>DOMAIN</scope>
</reference>
<reference key="2">
    <citation type="journal article" date="2004" name="Nature">
        <title>The sequence and analysis of duplication-rich human chromosome 16.</title>
        <authorList>
            <person name="Martin J."/>
            <person name="Han C."/>
            <person name="Gordon L.A."/>
            <person name="Terry A."/>
            <person name="Prabhakar S."/>
            <person name="She X."/>
            <person name="Xie G."/>
            <person name="Hellsten U."/>
            <person name="Chan Y.M."/>
            <person name="Altherr M."/>
            <person name="Couronne O."/>
            <person name="Aerts A."/>
            <person name="Bajorek E."/>
            <person name="Black S."/>
            <person name="Blumer H."/>
            <person name="Branscomb E."/>
            <person name="Brown N.C."/>
            <person name="Bruno W.J."/>
            <person name="Buckingham J.M."/>
            <person name="Callen D.F."/>
            <person name="Campbell C.S."/>
            <person name="Campbell M.L."/>
            <person name="Campbell E.W."/>
            <person name="Caoile C."/>
            <person name="Challacombe J.F."/>
            <person name="Chasteen L.A."/>
            <person name="Chertkov O."/>
            <person name="Chi H.C."/>
            <person name="Christensen M."/>
            <person name="Clark L.M."/>
            <person name="Cohn J.D."/>
            <person name="Denys M."/>
            <person name="Detter J.C."/>
            <person name="Dickson M."/>
            <person name="Dimitrijevic-Bussod M."/>
            <person name="Escobar J."/>
            <person name="Fawcett J.J."/>
            <person name="Flowers D."/>
            <person name="Fotopulos D."/>
            <person name="Glavina T."/>
            <person name="Gomez M."/>
            <person name="Gonzales E."/>
            <person name="Goodstein D."/>
            <person name="Goodwin L.A."/>
            <person name="Grady D.L."/>
            <person name="Grigoriev I."/>
            <person name="Groza M."/>
            <person name="Hammon N."/>
            <person name="Hawkins T."/>
            <person name="Haydu L."/>
            <person name="Hildebrand C.E."/>
            <person name="Huang W."/>
            <person name="Israni S."/>
            <person name="Jett J."/>
            <person name="Jewett P.B."/>
            <person name="Kadner K."/>
            <person name="Kimball H."/>
            <person name="Kobayashi A."/>
            <person name="Krawczyk M.-C."/>
            <person name="Leyba T."/>
            <person name="Longmire J.L."/>
            <person name="Lopez F."/>
            <person name="Lou Y."/>
            <person name="Lowry S."/>
            <person name="Ludeman T."/>
            <person name="Manohar C.F."/>
            <person name="Mark G.A."/>
            <person name="McMurray K.L."/>
            <person name="Meincke L.J."/>
            <person name="Morgan J."/>
            <person name="Moyzis R.K."/>
            <person name="Mundt M.O."/>
            <person name="Munk A.C."/>
            <person name="Nandkeshwar R.D."/>
            <person name="Pitluck S."/>
            <person name="Pollard M."/>
            <person name="Predki P."/>
            <person name="Parson-Quintana B."/>
            <person name="Ramirez L."/>
            <person name="Rash S."/>
            <person name="Retterer J."/>
            <person name="Ricke D.O."/>
            <person name="Robinson D.L."/>
            <person name="Rodriguez A."/>
            <person name="Salamov A."/>
            <person name="Saunders E.H."/>
            <person name="Scott D."/>
            <person name="Shough T."/>
            <person name="Stallings R.L."/>
            <person name="Stalvey M."/>
            <person name="Sutherland R.D."/>
            <person name="Tapia R."/>
            <person name="Tesmer J.G."/>
            <person name="Thayer N."/>
            <person name="Thompson L.S."/>
            <person name="Tice H."/>
            <person name="Torney D.C."/>
            <person name="Tran-Gyamfi M."/>
            <person name="Tsai M."/>
            <person name="Ulanovsky L.E."/>
            <person name="Ustaszewska A."/>
            <person name="Vo N."/>
            <person name="White P.S."/>
            <person name="Williams A.L."/>
            <person name="Wills P.L."/>
            <person name="Wu J.-R."/>
            <person name="Wu K."/>
            <person name="Yang J."/>
            <person name="DeJong P."/>
            <person name="Bruce D."/>
            <person name="Doggett N.A."/>
            <person name="Deaven L."/>
            <person name="Schmutz J."/>
            <person name="Grimwood J."/>
            <person name="Richardson P."/>
            <person name="Rokhsar D.S."/>
            <person name="Eichler E.E."/>
            <person name="Gilna P."/>
            <person name="Lucas S.M."/>
            <person name="Myers R.M."/>
            <person name="Rubin E.M."/>
            <person name="Pennacchio L.A."/>
        </authorList>
    </citation>
    <scope>NUCLEOTIDE SEQUENCE [LARGE SCALE GENOMIC DNA]</scope>
</reference>
<reference key="3">
    <citation type="journal article" date="2004" name="Genome Res.">
        <title>The status, quality, and expansion of the NIH full-length cDNA project: the Mammalian Gene Collection (MGC).</title>
        <authorList>
            <consortium name="The MGC Project Team"/>
        </authorList>
    </citation>
    <scope>NUCLEOTIDE SEQUENCE [LARGE SCALE MRNA] OF 80-747 (ISOFORM 2)</scope>
    <source>
        <tissue>Skin</tissue>
    </source>
</reference>
<reference key="4">
    <citation type="journal article" date="2008" name="J. Proteome Res.">
        <title>Combining protein-based IMAC, peptide-based IMAC, and MudPIT for efficient phosphoproteomic analysis.</title>
        <authorList>
            <person name="Cantin G.T."/>
            <person name="Yi W."/>
            <person name="Lu B."/>
            <person name="Park S.K."/>
            <person name="Xu T."/>
            <person name="Lee J.-D."/>
            <person name="Yates J.R. III"/>
        </authorList>
    </citation>
    <scope>PHOSPHORYLATION [LARGE SCALE ANALYSIS] AT SER-601; SER-639 AND THR-643</scope>
    <scope>IDENTIFICATION BY MASS SPECTROMETRY [LARGE SCALE ANALYSIS]</scope>
    <source>
        <tissue>Cervix carcinoma</tissue>
    </source>
</reference>
<reference key="5">
    <citation type="journal article" date="2008" name="Proc. Natl. Acad. Sci. U.S.A.">
        <title>A quantitative atlas of mitotic phosphorylation.</title>
        <authorList>
            <person name="Dephoure N."/>
            <person name="Zhou C."/>
            <person name="Villen J."/>
            <person name="Beausoleil S.A."/>
            <person name="Bakalarski C.E."/>
            <person name="Elledge S.J."/>
            <person name="Gygi S.P."/>
        </authorList>
    </citation>
    <scope>PHOSPHORYLATION [LARGE SCALE ANALYSIS] AT SER-441; SER-579; SER-612; SER-624; SER-634 AND SER-639</scope>
    <scope>IDENTIFICATION BY MASS SPECTROMETRY [LARGE SCALE ANALYSIS]</scope>
    <source>
        <tissue>Cervix carcinoma</tissue>
    </source>
</reference>
<reference key="6">
    <citation type="journal article" date="2009" name="Anal. Chem.">
        <title>Lys-N and trypsin cover complementary parts of the phosphoproteome in a refined SCX-based approach.</title>
        <authorList>
            <person name="Gauci S."/>
            <person name="Helbig A.O."/>
            <person name="Slijper M."/>
            <person name="Krijgsveld J."/>
            <person name="Heck A.J."/>
            <person name="Mohammed S."/>
        </authorList>
    </citation>
    <scope>IDENTIFICATION BY MASS SPECTROMETRY [LARGE SCALE ANALYSIS]</scope>
</reference>
<reference key="7">
    <citation type="journal article" date="2009" name="Sci. Signal.">
        <title>Quantitative phosphoproteomic analysis of T cell receptor signaling reveals system-wide modulation of protein-protein interactions.</title>
        <authorList>
            <person name="Mayya V."/>
            <person name="Lundgren D.H."/>
            <person name="Hwang S.-I."/>
            <person name="Rezaul K."/>
            <person name="Wu L."/>
            <person name="Eng J.K."/>
            <person name="Rodionov V."/>
            <person name="Han D.K."/>
        </authorList>
    </citation>
    <scope>IDENTIFICATION BY MASS SPECTROMETRY [LARGE SCALE ANALYSIS]</scope>
    <source>
        <tissue>Leukemic T-cell</tissue>
    </source>
</reference>
<reference key="8">
    <citation type="journal article" date="2010" name="Biochem. Biophys. Res. Commun.">
        <title>Abba promotes PDGF-mediated membrane ruffling through activation of the small GTPase Rac1.</title>
        <authorList>
            <person name="Zheng D."/>
            <person name="Niu S."/>
            <person name="Yu D."/>
            <person name="Zhan X.H."/>
            <person name="Zeng X."/>
            <person name="Cui B."/>
            <person name="Chen Y."/>
            <person name="Yoon J."/>
            <person name="Martin S.S."/>
            <person name="Lu X."/>
            <person name="Zhan X."/>
        </authorList>
    </citation>
    <scope>FUNCTION</scope>
    <scope>INTERACTION WITH RAC1</scope>
    <scope>SUBCELLULAR LOCATION</scope>
    <scope>MUTAGENESIS OF LYS-115; LYS-116; LYS-123; LYS-127; LYS-130; LYS-137; LYS-138; LYS-139; LYS-145; LYS-148; LYS-149; LYS-152 AND LYS-157</scope>
</reference>
<reference key="9">
    <citation type="journal article" date="2010" name="Sci. Signal.">
        <title>Quantitative phosphoproteomics reveals widespread full phosphorylation site occupancy during mitosis.</title>
        <authorList>
            <person name="Olsen J.V."/>
            <person name="Vermeulen M."/>
            <person name="Santamaria A."/>
            <person name="Kumar C."/>
            <person name="Miller M.L."/>
            <person name="Jensen L.J."/>
            <person name="Gnad F."/>
            <person name="Cox J."/>
            <person name="Jensen T.S."/>
            <person name="Nigg E.A."/>
            <person name="Brunak S."/>
            <person name="Mann M."/>
        </authorList>
    </citation>
    <scope>PHOSPHORYLATION [LARGE SCALE ANALYSIS] AT SER-441</scope>
    <scope>IDENTIFICATION BY MASS SPECTROMETRY [LARGE SCALE ANALYSIS]</scope>
    <source>
        <tissue>Cervix carcinoma</tissue>
    </source>
</reference>
<reference key="10">
    <citation type="journal article" date="2013" name="J. Proteome Res.">
        <title>Toward a comprehensive characterization of a human cancer cell phosphoproteome.</title>
        <authorList>
            <person name="Zhou H."/>
            <person name="Di Palma S."/>
            <person name="Preisinger C."/>
            <person name="Peng M."/>
            <person name="Polat A.N."/>
            <person name="Heck A.J."/>
            <person name="Mohammed S."/>
        </authorList>
    </citation>
    <scope>PHOSPHORYLATION [LARGE SCALE ANALYSIS] AT SER-579; SER-601 AND SER-612</scope>
    <scope>IDENTIFICATION BY MASS SPECTROMETRY [LARGE SCALE ANALYSIS]</scope>
    <source>
        <tissue>Cervix carcinoma</tissue>
        <tissue>Erythroleukemia</tissue>
    </source>
</reference>
<reference key="11">
    <citation type="journal article" date="2014" name="J. Proteomics">
        <title>An enzyme assisted RP-RPLC approach for in-depth analysis of human liver phosphoproteome.</title>
        <authorList>
            <person name="Bian Y."/>
            <person name="Song C."/>
            <person name="Cheng K."/>
            <person name="Dong M."/>
            <person name="Wang F."/>
            <person name="Huang J."/>
            <person name="Sun D."/>
            <person name="Wang L."/>
            <person name="Ye M."/>
            <person name="Zou H."/>
        </authorList>
    </citation>
    <scope>PHOSPHORYLATION [LARGE SCALE ANALYSIS] AT SER-601 AND SER-639</scope>
    <scope>IDENTIFICATION BY MASS SPECTROMETRY [LARGE SCALE ANALYSIS]</scope>
    <source>
        <tissue>Liver</tissue>
    </source>
</reference>
<reference key="12">
    <citation type="journal article" date="2022" name="Am. J. Hum. Genet.">
        <title>The recurrent de novo c.2011C&gt;T missense variant in MTSS2 causes syndromic intellectual disability.</title>
        <authorList>
            <consortium name="Undiagnosed Diseases Network"/>
            <consortium name="Care4Rare Canada Consortium"/>
            <person name="Huang Y."/>
            <person name="Lemire G."/>
            <person name="Briere L.C."/>
            <person name="Liu F."/>
            <person name="Wessels M.W."/>
            <person name="Wang X."/>
            <person name="Osmond M."/>
            <person name="Kanca O."/>
            <person name="Lu S."/>
            <person name="High F.A."/>
            <person name="Walker M.A."/>
            <person name="Rodan L.H."/>
            <person name="Kernohan K.D."/>
            <person name="Sweetser D.A."/>
            <person name="Boycott K.M."/>
            <person name="Bellen H.J."/>
        </authorList>
    </citation>
    <scope>VARIANT IDDOF TRP-671</scope>
    <scope>INVOLVEMENT IN IDDOF</scope>
    <scope>CHARACTERIZATION OF VARIANT IDDOF TRP-671</scope>
</reference>
<reference key="13">
    <citation type="journal article" date="2022" name="Am. J. Hum. Genet.">
        <authorList>
            <consortium name="Undiagnosed Diseases Network"/>
            <consortium name="Care4Rare Canada Consortium"/>
            <person name="Huang Y."/>
            <person name="Lemire G."/>
            <person name="Briere L.C."/>
            <person name="Liu F."/>
            <person name="Wessels M.W."/>
            <person name="Wang X."/>
            <person name="Osmond M."/>
            <person name="Kanca O."/>
            <person name="Lu S."/>
            <person name="High F.A."/>
            <person name="Walker M.A."/>
            <person name="Rodan L.H."/>
            <person name="Wangler M.F."/>
            <person name="Yamamoto S."/>
            <person name="Kernohan K.D."/>
            <person name="Sweetser D.A."/>
            <person name="Boycott K.M."/>
            <person name="Bellen H.J."/>
        </authorList>
    </citation>
    <scope>ERRATUM OF PUBMED:36067766</scope>
</reference>
<gene>
    <name evidence="10" type="primary">MTSS2</name>
    <name evidence="10" type="synonym">MTSS1L</name>
</gene>
<name>MTSS2_HUMAN</name>